<proteinExistence type="evidence at protein level"/>
<sequence length="220" mass="23833">MTEQKALVKRITNETKIQIAISLKGGPLAIEHSIFPEKEAEAVAEQATQSQVINVHTGIGFLDHMIHALAKHSGWSLIVECIGDLHIDDHHTTEDCGIALGQAFKEALGAVRGVKRFGSGFAPLDEALSRAVVDLSNRPYAVVELGLQREKVGDLSCEMIPHFLESFAEASRITLHVDCLRGKNDHHRSESAFKALAVAIREATSPNGTNDVPSTKGVLM</sequence>
<protein>
    <recommendedName>
        <fullName>Imidazoleglycerol-phosphate dehydratase</fullName>
        <shortName>IGPD</shortName>
        <ecNumber evidence="2">4.2.1.19</ecNumber>
    </recommendedName>
</protein>
<comment type="catalytic activity">
    <reaction evidence="2">
        <text>D-erythro-1-(imidazol-4-yl)glycerol 3-phosphate = 3-(imidazol-4-yl)-2-oxopropyl phosphate + H2O</text>
        <dbReference type="Rhea" id="RHEA:11040"/>
        <dbReference type="ChEBI" id="CHEBI:15377"/>
        <dbReference type="ChEBI" id="CHEBI:57766"/>
        <dbReference type="ChEBI" id="CHEBI:58278"/>
        <dbReference type="EC" id="4.2.1.19"/>
    </reaction>
</comment>
<comment type="cofactor">
    <cofactor evidence="5">
        <name>Mn(2+)</name>
        <dbReference type="ChEBI" id="CHEBI:29035"/>
    </cofactor>
    <text evidence="5">Binds 2 manganese ions per subunit.</text>
</comment>
<comment type="pathway">
    <text evidence="2">Amino-acid biosynthesis; L-histidine biosynthesis; L-histidine from 5-phospho-alpha-D-ribose 1-diphosphate: step 6/9.</text>
</comment>
<comment type="induction">
    <text evidence="6">Induced by histidine starvation in a GCN4-dependent manner.</text>
</comment>
<comment type="miscellaneous">
    <text evidence="3">Present with 2100 molecules/cell in log phase SD medium.</text>
</comment>
<comment type="similarity">
    <text evidence="8">Belongs to the imidazoleglycerol-phosphate dehydratase family.</text>
</comment>
<dbReference type="EC" id="4.2.1.19" evidence="2"/>
<dbReference type="EMBL" id="X03245">
    <property type="protein sequence ID" value="CAA27003.1"/>
    <property type="molecule type" value="Genomic_DNA"/>
</dbReference>
<dbReference type="EMBL" id="U89927">
    <property type="protein sequence ID" value="AAB64382.1"/>
    <property type="molecule type" value="Genomic_DNA"/>
</dbReference>
<dbReference type="EMBL" id="U89928">
    <property type="protein sequence ID" value="AAB64385.1"/>
    <property type="molecule type" value="Genomic_DNA"/>
</dbReference>
<dbReference type="EMBL" id="AJ585705">
    <property type="protein sequence ID" value="CAE52225.1"/>
    <property type="molecule type" value="Genomic_DNA"/>
</dbReference>
<dbReference type="EMBL" id="AJ585706">
    <property type="protein sequence ID" value="CAE52226.1"/>
    <property type="molecule type" value="Genomic_DNA"/>
</dbReference>
<dbReference type="EMBL" id="AJ585707">
    <property type="protein sequence ID" value="CAE52227.1"/>
    <property type="molecule type" value="Genomic_DNA"/>
</dbReference>
<dbReference type="EMBL" id="AJ585708">
    <property type="protein sequence ID" value="CAE52228.1"/>
    <property type="molecule type" value="Genomic_DNA"/>
</dbReference>
<dbReference type="EMBL" id="AJ585709">
    <property type="protein sequence ID" value="CAE52229.1"/>
    <property type="molecule type" value="Genomic_DNA"/>
</dbReference>
<dbReference type="EMBL" id="AJ585710">
    <property type="protein sequence ID" value="CAE52230.1"/>
    <property type="molecule type" value="Genomic_DNA"/>
</dbReference>
<dbReference type="EMBL" id="AJ585711">
    <property type="protein sequence ID" value="CAE52231.1"/>
    <property type="molecule type" value="Genomic_DNA"/>
</dbReference>
<dbReference type="EMBL" id="AJ585712">
    <property type="protein sequence ID" value="CAE52232.1"/>
    <property type="molecule type" value="Genomic_DNA"/>
</dbReference>
<dbReference type="EMBL" id="AJ585713">
    <property type="protein sequence ID" value="CAE52233.1"/>
    <property type="molecule type" value="Genomic_DNA"/>
</dbReference>
<dbReference type="EMBL" id="AJ585714">
    <property type="protein sequence ID" value="CAE52234.1"/>
    <property type="molecule type" value="Genomic_DNA"/>
</dbReference>
<dbReference type="EMBL" id="AJ585715">
    <property type="protein sequence ID" value="CAE52235.1"/>
    <property type="molecule type" value="Genomic_DNA"/>
</dbReference>
<dbReference type="EMBL" id="AJ585716">
    <property type="protein sequence ID" value="CAE52236.1"/>
    <property type="molecule type" value="Genomic_DNA"/>
</dbReference>
<dbReference type="EMBL" id="AJ585717">
    <property type="protein sequence ID" value="CAE52237.1"/>
    <property type="molecule type" value="Genomic_DNA"/>
</dbReference>
<dbReference type="EMBL" id="AJ585718">
    <property type="protein sequence ID" value="CAE52238.1"/>
    <property type="molecule type" value="Genomic_DNA"/>
</dbReference>
<dbReference type="EMBL" id="AJ585719">
    <property type="protein sequence ID" value="CAE52239.1"/>
    <property type="molecule type" value="Genomic_DNA"/>
</dbReference>
<dbReference type="EMBL" id="Z75110">
    <property type="protein sequence ID" value="CAA99417.1"/>
    <property type="molecule type" value="Genomic_DNA"/>
</dbReference>
<dbReference type="EMBL" id="J01330">
    <property type="protein sequence ID" value="AAA88723.1"/>
    <property type="molecule type" value="Genomic_DNA"/>
</dbReference>
<dbReference type="EMBL" id="BK006948">
    <property type="protein sequence ID" value="DAA10975.1"/>
    <property type="molecule type" value="Genomic_DNA"/>
</dbReference>
<dbReference type="PIR" id="S67094">
    <property type="entry name" value="DWBYH"/>
</dbReference>
<dbReference type="RefSeq" id="NP_014845.1">
    <property type="nucleotide sequence ID" value="NM_001183621.1"/>
</dbReference>
<dbReference type="PDB" id="6EZM">
    <property type="method" value="EM"/>
    <property type="resolution" value="3.20 A"/>
    <property type="chains" value="A/B/C/D/E/F/G/H/I/J/K/L/M/N/O/P/Q/R/S/T/U/V/W/X=1-220"/>
</dbReference>
<dbReference type="PDBsum" id="6EZM"/>
<dbReference type="EMDB" id="EMD-4160"/>
<dbReference type="SMR" id="P06633"/>
<dbReference type="BioGRID" id="34598">
    <property type="interactions" value="63"/>
</dbReference>
<dbReference type="DIP" id="DIP-6759N"/>
<dbReference type="FunCoup" id="P06633">
    <property type="interactions" value="324"/>
</dbReference>
<dbReference type="IntAct" id="P06633">
    <property type="interactions" value="11"/>
</dbReference>
<dbReference type="MINT" id="P06633"/>
<dbReference type="STRING" id="4932.YOR202W"/>
<dbReference type="BindingDB" id="P06633"/>
<dbReference type="iPTMnet" id="P06633"/>
<dbReference type="PaxDb" id="4932-YOR202W"/>
<dbReference type="PeptideAtlas" id="P06633"/>
<dbReference type="EnsemblFungi" id="YOR202W_mRNA">
    <property type="protein sequence ID" value="YOR202W"/>
    <property type="gene ID" value="YOR202W"/>
</dbReference>
<dbReference type="GeneID" id="854377"/>
<dbReference type="KEGG" id="sce:YOR202W"/>
<dbReference type="AGR" id="SGD:S000005728"/>
<dbReference type="SGD" id="S000005728">
    <property type="gene designation" value="HIS3"/>
</dbReference>
<dbReference type="VEuPathDB" id="FungiDB:YOR202W"/>
<dbReference type="eggNOG" id="KOG3143">
    <property type="taxonomic scope" value="Eukaryota"/>
</dbReference>
<dbReference type="HOGENOM" id="CLU_044308_3_0_1"/>
<dbReference type="InParanoid" id="P06633"/>
<dbReference type="OMA" id="GIPFFDH"/>
<dbReference type="OrthoDB" id="447729at2759"/>
<dbReference type="BioCyc" id="YEAST:YOR202W-MONOMER"/>
<dbReference type="UniPathway" id="UPA00031">
    <property type="reaction ID" value="UER00011"/>
</dbReference>
<dbReference type="BioGRID-ORCS" id="854377">
    <property type="hits" value="0 hits in 10 CRISPR screens"/>
</dbReference>
<dbReference type="PRO" id="PR:P06633"/>
<dbReference type="Proteomes" id="UP000002311">
    <property type="component" value="Chromosome XV"/>
</dbReference>
<dbReference type="RNAct" id="P06633">
    <property type="molecule type" value="protein"/>
</dbReference>
<dbReference type="GO" id="GO:0004424">
    <property type="term" value="F:imidazoleglycerol-phosphate dehydratase activity"/>
    <property type="evidence" value="ECO:0000314"/>
    <property type="project" value="SGD"/>
</dbReference>
<dbReference type="GO" id="GO:0046872">
    <property type="term" value="F:metal ion binding"/>
    <property type="evidence" value="ECO:0007669"/>
    <property type="project" value="UniProtKB-KW"/>
</dbReference>
<dbReference type="GO" id="GO:0000105">
    <property type="term" value="P:L-histidine biosynthetic process"/>
    <property type="evidence" value="ECO:0000314"/>
    <property type="project" value="SGD"/>
</dbReference>
<dbReference type="CDD" id="cd07914">
    <property type="entry name" value="IGPD"/>
    <property type="match status" value="1"/>
</dbReference>
<dbReference type="FunFam" id="3.30.230.40:FF:000005">
    <property type="entry name" value="Imidazoleglycerol-phosphate dehydratase"/>
    <property type="match status" value="1"/>
</dbReference>
<dbReference type="FunFam" id="3.30.230.40:FF:000001">
    <property type="entry name" value="Imidazoleglycerol-phosphate dehydratase HisB"/>
    <property type="match status" value="1"/>
</dbReference>
<dbReference type="Gene3D" id="3.30.230.40">
    <property type="entry name" value="Imidazole glycerol phosphate dehydratase, domain 1"/>
    <property type="match status" value="2"/>
</dbReference>
<dbReference type="HAMAP" id="MF_00076">
    <property type="entry name" value="HisB"/>
    <property type="match status" value="1"/>
</dbReference>
<dbReference type="InterPro" id="IPR038494">
    <property type="entry name" value="IGPD_sf"/>
</dbReference>
<dbReference type="InterPro" id="IPR000807">
    <property type="entry name" value="ImidazoleglycerolP_deHydtase"/>
</dbReference>
<dbReference type="InterPro" id="IPR020565">
    <property type="entry name" value="ImidazoleglycerP_deHydtase_CS"/>
</dbReference>
<dbReference type="InterPro" id="IPR020568">
    <property type="entry name" value="Ribosomal_Su5_D2-typ_SF"/>
</dbReference>
<dbReference type="NCBIfam" id="NF002114">
    <property type="entry name" value="PRK00951.2-4"/>
    <property type="match status" value="1"/>
</dbReference>
<dbReference type="PANTHER" id="PTHR23133:SF2">
    <property type="entry name" value="IMIDAZOLEGLYCEROL-PHOSPHATE DEHYDRATASE"/>
    <property type="match status" value="1"/>
</dbReference>
<dbReference type="PANTHER" id="PTHR23133">
    <property type="entry name" value="IMIDAZOLEGLYCEROL-PHOSPHATE DEHYDRATASE HIS7"/>
    <property type="match status" value="1"/>
</dbReference>
<dbReference type="Pfam" id="PF00475">
    <property type="entry name" value="IGPD"/>
    <property type="match status" value="1"/>
</dbReference>
<dbReference type="SUPFAM" id="SSF54211">
    <property type="entry name" value="Ribosomal protein S5 domain 2-like"/>
    <property type="match status" value="2"/>
</dbReference>
<dbReference type="PROSITE" id="PS00954">
    <property type="entry name" value="IGP_DEHYDRATASE_1"/>
    <property type="match status" value="1"/>
</dbReference>
<dbReference type="PROSITE" id="PS00955">
    <property type="entry name" value="IGP_DEHYDRATASE_2"/>
    <property type="match status" value="1"/>
</dbReference>
<name>HIS7_YEAST</name>
<keyword id="KW-0002">3D-structure</keyword>
<keyword id="KW-0028">Amino-acid biosynthesis</keyword>
<keyword id="KW-0368">Histidine biosynthesis</keyword>
<keyword id="KW-0456">Lyase</keyword>
<keyword id="KW-0464">Manganese</keyword>
<keyword id="KW-0479">Metal-binding</keyword>
<keyword id="KW-1185">Reference proteome</keyword>
<organism>
    <name type="scientific">Saccharomyces cerevisiae (strain ATCC 204508 / S288c)</name>
    <name type="common">Baker's yeast</name>
    <dbReference type="NCBI Taxonomy" id="559292"/>
    <lineage>
        <taxon>Eukaryota</taxon>
        <taxon>Fungi</taxon>
        <taxon>Dikarya</taxon>
        <taxon>Ascomycota</taxon>
        <taxon>Saccharomycotina</taxon>
        <taxon>Saccharomycetes</taxon>
        <taxon>Saccharomycetales</taxon>
        <taxon>Saccharomycetaceae</taxon>
        <taxon>Saccharomyces</taxon>
    </lineage>
</organism>
<accession>P06633</accession>
<accession>D6W2Q9</accession>
<accession>Q12695</accession>
<accession>Q70D78</accession>
<accession>Q70D79</accession>
<accession>Q70D81</accession>
<accession>Q70D83</accession>
<feature type="chain" id="PRO_0000158250" description="Imidazoleglycerol-phosphate dehydratase">
    <location>
        <begin position="1"/>
        <end position="220"/>
    </location>
</feature>
<feature type="binding site" evidence="1">
    <location>
        <position position="14"/>
    </location>
    <ligand>
        <name>substrate</name>
    </ligand>
</feature>
<feature type="binding site" evidence="5 9">
    <location>
        <begin position="64"/>
        <end position="72"/>
    </location>
    <ligand>
        <name>substrate</name>
    </ligand>
</feature>
<feature type="binding site" evidence="5 9">
    <location>
        <position position="64"/>
    </location>
    <ligand>
        <name>Mn(2+)</name>
        <dbReference type="ChEBI" id="CHEBI:29035"/>
        <label>1</label>
    </ligand>
</feature>
<feature type="binding site" evidence="5 9">
    <location>
        <begin position="90"/>
        <end position="94"/>
    </location>
    <ligand>
        <name>substrate</name>
    </ligand>
</feature>
<feature type="binding site" evidence="5 9">
    <location>
        <position position="90"/>
    </location>
    <ligand>
        <name>Mn(2+)</name>
        <dbReference type="ChEBI" id="CHEBI:29035"/>
        <label>2</label>
    </ligand>
</feature>
<feature type="binding site" evidence="5 9">
    <location>
        <position position="91"/>
    </location>
    <ligand>
        <name>Mn(2+)</name>
        <dbReference type="ChEBI" id="CHEBI:29035"/>
        <label>1</label>
    </ligand>
</feature>
<feature type="binding site" evidence="5 9">
    <location>
        <position position="94"/>
    </location>
    <ligand>
        <name>Mn(2+)</name>
        <dbReference type="ChEBI" id="CHEBI:29035"/>
        <label>2</label>
    </ligand>
</feature>
<feature type="binding site" evidence="5 9">
    <location>
        <position position="116"/>
    </location>
    <ligand>
        <name>substrate</name>
    </ligand>
</feature>
<feature type="binding site" evidence="1">
    <location>
        <position position="138"/>
    </location>
    <ligand>
        <name>substrate</name>
    </ligand>
</feature>
<feature type="binding site" evidence="5 9">
    <location>
        <position position="162"/>
    </location>
    <ligand>
        <name>Mn(2+)</name>
        <dbReference type="ChEBI" id="CHEBI:29035"/>
        <label>2</label>
    </ligand>
</feature>
<feature type="binding site" evidence="5 9">
    <location>
        <begin position="186"/>
        <end position="194"/>
    </location>
    <ligand>
        <name>substrate</name>
    </ligand>
</feature>
<feature type="binding site" evidence="5 9">
    <location>
        <position position="186"/>
    </location>
    <ligand>
        <name>Mn(2+)</name>
        <dbReference type="ChEBI" id="CHEBI:29035"/>
        <label>1</label>
    </ligand>
</feature>
<feature type="binding site" evidence="5 9">
    <location>
        <position position="187"/>
    </location>
    <ligand>
        <name>Mn(2+)</name>
        <dbReference type="ChEBI" id="CHEBI:29035"/>
        <label>2</label>
    </ligand>
</feature>
<feature type="binding site" evidence="5 9">
    <location>
        <position position="190"/>
    </location>
    <ligand>
        <name>Mn(2+)</name>
        <dbReference type="ChEBI" id="CHEBI:29035"/>
        <label>1</label>
    </ligand>
</feature>
<feature type="binding site" evidence="5 9">
    <location>
        <begin position="214"/>
        <end position="216"/>
    </location>
    <ligand>
        <name>substrate</name>
    </ligand>
</feature>
<feature type="sequence variant" description="In strain: CLIB 219." evidence="4">
    <original>V</original>
    <variation>I</variation>
    <location>
        <position position="8"/>
    </location>
</feature>
<feature type="sequence variant" description="In strain: CLIB 219, CLIB 410, CLIB 413 and YIIc17 haplotype Ha2." evidence="4">
    <original>I</original>
    <variation>L</variation>
    <location>
        <position position="30"/>
    </location>
</feature>
<feature type="sequence variant" description="In strain: YIIc12 and YIIc17 haplotype Ha1." evidence="4">
    <original>T</original>
    <variation>A</variation>
    <location>
        <position position="92"/>
    </location>
</feature>
<feature type="sequence variant" description="In strain: YIIc17 haplotype Ha2." evidence="4">
    <original>K</original>
    <variation>N</variation>
    <location>
        <position position="216"/>
    </location>
</feature>
<feature type="sequence conflict" description="In Ref. 1 and 2." evidence="8" ref="1 2">
    <original>GAV</original>
    <variation>LA</variation>
    <location>
        <begin position="109"/>
        <end position="111"/>
    </location>
</feature>
<feature type="strand" evidence="10">
    <location>
        <begin position="5"/>
        <end position="8"/>
    </location>
</feature>
<feature type="strand" evidence="10">
    <location>
        <begin position="13"/>
        <end position="22"/>
    </location>
</feature>
<feature type="strand" evidence="10">
    <location>
        <begin position="34"/>
        <end position="36"/>
    </location>
</feature>
<feature type="strand" evidence="10">
    <location>
        <begin position="45"/>
        <end position="47"/>
    </location>
</feature>
<feature type="strand" evidence="10">
    <location>
        <begin position="49"/>
        <end position="56"/>
    </location>
</feature>
<feature type="helix" evidence="10">
    <location>
        <begin position="60"/>
        <end position="71"/>
    </location>
</feature>
<feature type="turn" evidence="10">
    <location>
        <begin position="72"/>
        <end position="74"/>
    </location>
</feature>
<feature type="strand" evidence="10">
    <location>
        <begin position="76"/>
        <end position="83"/>
    </location>
</feature>
<feature type="helix" evidence="10">
    <location>
        <begin position="91"/>
        <end position="107"/>
    </location>
</feature>
<feature type="strand" evidence="10">
    <location>
        <begin position="118"/>
        <end position="124"/>
    </location>
</feature>
<feature type="strand" evidence="10">
    <location>
        <begin position="127"/>
        <end position="133"/>
    </location>
</feature>
<feature type="strand" evidence="10">
    <location>
        <begin position="140"/>
        <end position="144"/>
    </location>
</feature>
<feature type="strand" evidence="10">
    <location>
        <begin position="152"/>
        <end position="155"/>
    </location>
</feature>
<feature type="helix" evidence="10">
    <location>
        <begin position="159"/>
        <end position="171"/>
    </location>
</feature>
<feature type="strand" evidence="10">
    <location>
        <begin position="174"/>
        <end position="181"/>
    </location>
</feature>
<feature type="helix" evidence="10">
    <location>
        <begin position="185"/>
        <end position="203"/>
    </location>
</feature>
<feature type="strand" evidence="10">
    <location>
        <begin position="215"/>
        <end position="217"/>
    </location>
</feature>
<reference key="1">
    <citation type="journal article" date="1985" name="Nucleic Acids Res.">
        <title>Nucleotide sequence and transcriptional mapping of the yeast pet56-his3-ded1 gene region.</title>
        <authorList>
            <person name="Struhl K."/>
        </authorList>
    </citation>
    <scope>NUCLEOTIDE SEQUENCE [GENOMIC DNA]</scope>
</reference>
<reference key="2">
    <citation type="submission" date="1997-06" db="EMBL/GenBank/DDBJ databases">
        <title>pHISi-1, complete sequence.</title>
        <authorList>
            <person name="Holtz A."/>
            <person name="Lou Y."/>
        </authorList>
    </citation>
    <scope>NUCLEOTIDE SEQUENCE [GENOMIC DNA]</scope>
</reference>
<reference key="3">
    <citation type="journal article" date="2004" name="Nucleic Acids Res.">
        <title>Differential evolution of the Saccharomyces cerevisiae DUP240 paralogs and implication of recombination in phylogeny.</title>
        <authorList>
            <person name="Leh-Louis V."/>
            <person name="Wirth B."/>
            <person name="Despons L."/>
            <person name="Wain-Hobson S."/>
            <person name="Potier S."/>
            <person name="Souciet J.-L."/>
        </authorList>
    </citation>
    <scope>NUCLEOTIDE SEQUENCE [GENOMIC DNA]</scope>
    <scope>VARIANTS ILE-8; LEU-30; ALA-92 AND ASN-216</scope>
    <source>
        <strain>CLIB 219</strain>
        <strain>CLIB 382</strain>
        <strain>CLIB 388</strain>
        <strain>CLIB 410</strain>
        <strain>CLIB 413</strain>
        <strain>CLIB 556</strain>
        <strain>CLIB 630</strain>
        <strain>CLIB 95</strain>
        <strain>K1</strain>
        <strain>R12</strain>
        <strain>R13</strain>
        <strain>Sigma 1278B</strain>
        <strain>YIIc12</strain>
        <strain>YIIc17</strain>
    </source>
</reference>
<reference key="4">
    <citation type="journal article" date="1997" name="Nature">
        <title>The nucleotide sequence of Saccharomyces cerevisiae chromosome XV.</title>
        <authorList>
            <person name="Dujon B."/>
            <person name="Albermann K."/>
            <person name="Aldea M."/>
            <person name="Alexandraki D."/>
            <person name="Ansorge W."/>
            <person name="Arino J."/>
            <person name="Benes V."/>
            <person name="Bohn C."/>
            <person name="Bolotin-Fukuhara M."/>
            <person name="Bordonne R."/>
            <person name="Boyer J."/>
            <person name="Camasses A."/>
            <person name="Casamayor A."/>
            <person name="Casas C."/>
            <person name="Cheret G."/>
            <person name="Cziepluch C."/>
            <person name="Daignan-Fornier B."/>
            <person name="Dang V.-D."/>
            <person name="de Haan M."/>
            <person name="Delius H."/>
            <person name="Durand P."/>
            <person name="Fairhead C."/>
            <person name="Feldmann H."/>
            <person name="Gaillon L."/>
            <person name="Galisson F."/>
            <person name="Gamo F.-J."/>
            <person name="Gancedo C."/>
            <person name="Goffeau A."/>
            <person name="Goulding S.E."/>
            <person name="Grivell L.A."/>
            <person name="Habbig B."/>
            <person name="Hand N.J."/>
            <person name="Hani J."/>
            <person name="Hattenhorst U."/>
            <person name="Hebling U."/>
            <person name="Hernando Y."/>
            <person name="Herrero E."/>
            <person name="Heumann K."/>
            <person name="Hiesel R."/>
            <person name="Hilger F."/>
            <person name="Hofmann B."/>
            <person name="Hollenberg C.P."/>
            <person name="Hughes B."/>
            <person name="Jauniaux J.-C."/>
            <person name="Kalogeropoulos A."/>
            <person name="Katsoulou C."/>
            <person name="Kordes E."/>
            <person name="Lafuente M.J."/>
            <person name="Landt O."/>
            <person name="Louis E.J."/>
            <person name="Maarse A.C."/>
            <person name="Madania A."/>
            <person name="Mannhaupt G."/>
            <person name="Marck C."/>
            <person name="Martin R.P."/>
            <person name="Mewes H.-W."/>
            <person name="Michaux G."/>
            <person name="Paces V."/>
            <person name="Parle-McDermott A.G."/>
            <person name="Pearson B.M."/>
            <person name="Perrin A."/>
            <person name="Pettersson B."/>
            <person name="Poch O."/>
            <person name="Pohl T.M."/>
            <person name="Poirey R."/>
            <person name="Portetelle D."/>
            <person name="Pujol A."/>
            <person name="Purnelle B."/>
            <person name="Ramezani Rad M."/>
            <person name="Rechmann S."/>
            <person name="Schwager C."/>
            <person name="Schweizer M."/>
            <person name="Sor F."/>
            <person name="Sterky F."/>
            <person name="Tarassov I.A."/>
            <person name="Teodoru C."/>
            <person name="Tettelin H."/>
            <person name="Thierry A."/>
            <person name="Tobiasch E."/>
            <person name="Tzermia M."/>
            <person name="Uhlen M."/>
            <person name="Unseld M."/>
            <person name="Valens M."/>
            <person name="Vandenbol M."/>
            <person name="Vetter I."/>
            <person name="Vlcek C."/>
            <person name="Voet M."/>
            <person name="Volckaert G."/>
            <person name="Voss H."/>
            <person name="Wambutt R."/>
            <person name="Wedler H."/>
            <person name="Wiemann S."/>
            <person name="Winsor B."/>
            <person name="Wolfe K.H."/>
            <person name="Zollner A."/>
            <person name="Zumstein E."/>
            <person name="Kleine K."/>
        </authorList>
    </citation>
    <scope>NUCLEOTIDE SEQUENCE [LARGE SCALE GENOMIC DNA]</scope>
    <source>
        <strain>ATCC 204508 / S288c</strain>
    </source>
</reference>
<reference key="5">
    <citation type="journal article" date="2014" name="G3 (Bethesda)">
        <title>The reference genome sequence of Saccharomyces cerevisiae: Then and now.</title>
        <authorList>
            <person name="Engel S.R."/>
            <person name="Dietrich F.S."/>
            <person name="Fisk D.G."/>
            <person name="Binkley G."/>
            <person name="Balakrishnan R."/>
            <person name="Costanzo M.C."/>
            <person name="Dwight S.S."/>
            <person name="Hitz B.C."/>
            <person name="Karra K."/>
            <person name="Nash R.S."/>
            <person name="Weng S."/>
            <person name="Wong E.D."/>
            <person name="Lloyd P."/>
            <person name="Skrzypek M.S."/>
            <person name="Miyasato S.R."/>
            <person name="Simison M."/>
            <person name="Cherry J.M."/>
        </authorList>
    </citation>
    <scope>GENOME REANNOTATION</scope>
    <source>
        <strain>ATCC 204508 / S288c</strain>
    </source>
</reference>
<reference key="6">
    <citation type="journal article" date="1981" name="J. Mol. Biol.">
        <title>Promotor mutants of the yeast his3 gene.</title>
        <authorList>
            <person name="Struhl K."/>
            <person name="Davis R.W."/>
        </authorList>
    </citation>
    <scope>NUCLEOTIDE SEQUENCE [GENOMIC DNA] OF 1-32</scope>
</reference>
<reference key="7">
    <citation type="journal article" date="1986" name="Science">
        <title>Saturation mutagenesis of the yeast his3 regulatory site: requirements for transcriptional induction and for binding by GCN4 activator protein.</title>
        <authorList>
            <person name="Hill D.E."/>
            <person name="Hope I.A."/>
            <person name="Macke J.P."/>
            <person name="Struhl K."/>
        </authorList>
    </citation>
    <scope>INDUCTION</scope>
</reference>
<reference key="8">
    <citation type="journal article" date="2003" name="Nature">
        <title>Global analysis of protein expression in yeast.</title>
        <authorList>
            <person name="Ghaemmaghami S."/>
            <person name="Huh W.-K."/>
            <person name="Bower K."/>
            <person name="Howson R.W."/>
            <person name="Belle A."/>
            <person name="Dephoure N."/>
            <person name="O'Shea E.K."/>
            <person name="Weissman J.S."/>
        </authorList>
    </citation>
    <scope>LEVEL OF PROTEIN EXPRESSION [LARGE SCALE ANALYSIS]</scope>
</reference>
<reference key="9">
    <citation type="journal article" date="2018" name="Proc. Natl. Acad. Sci. U.S.A.">
        <title>Elucidating the structural basis for differing enzyme inhibitor potency by cryo-EM.</title>
        <authorList>
            <person name="Rawson S."/>
            <person name="Bisson C."/>
            <person name="Hurdiss D.L."/>
            <person name="Fazal A."/>
            <person name="McPhillie M.J."/>
            <person name="Sedelnikova S.E."/>
            <person name="Baker P.J."/>
            <person name="Rice D.W."/>
            <person name="Muench S.P."/>
        </authorList>
    </citation>
    <scope>STRUCTURE BY ELECTRON MICROSCOPY (3.20 ANGSTROMS) IN COMPLEX WITH MANGANESE AND C348</scope>
</reference>
<gene>
    <name evidence="7" type="primary">HIS3</name>
    <name type="ordered locus">YOR202W</name>
</gene>
<evidence type="ECO:0000250" key="1">
    <source>
        <dbReference type="UniProtKB" id="O23346"/>
    </source>
</evidence>
<evidence type="ECO:0000250" key="2">
    <source>
        <dbReference type="UniProtKB" id="P9WML9"/>
    </source>
</evidence>
<evidence type="ECO:0000269" key="3">
    <source>
    </source>
</evidence>
<evidence type="ECO:0000269" key="4">
    <source>
    </source>
</evidence>
<evidence type="ECO:0000269" key="5">
    <source>
    </source>
</evidence>
<evidence type="ECO:0000269" key="6">
    <source>
    </source>
</evidence>
<evidence type="ECO:0000303" key="7">
    <source>
    </source>
</evidence>
<evidence type="ECO:0000305" key="8"/>
<evidence type="ECO:0007744" key="9">
    <source>
        <dbReference type="PDB" id="6EZM"/>
    </source>
</evidence>
<evidence type="ECO:0007829" key="10">
    <source>
        <dbReference type="PDB" id="6EZM"/>
    </source>
</evidence>